<evidence type="ECO:0000255" key="1">
    <source>
        <dbReference type="PROSITE-ProRule" id="PRU00469"/>
    </source>
</evidence>
<evidence type="ECO:0000305" key="2"/>
<evidence type="ECO:0000312" key="3">
    <source>
        <dbReference type="EMBL" id="QXJ30289.1"/>
    </source>
</evidence>
<proteinExistence type="inferred from homology"/>
<name>YTF2_SACSH</name>
<gene>
    <name evidence="3" type="ORF">J5U23_03187</name>
</gene>
<reference key="1">
    <citation type="submission" date="1994-10" db="EMBL/GenBank/DDBJ databases">
        <authorList>
            <person name="Osipiuk J."/>
            <person name="Trent J.D."/>
        </authorList>
    </citation>
    <scope>NUCLEOTIDE SEQUENCE [GENOMIC DNA]</scope>
    <source>
        <strain>ATCC 51178 / DSM 5389 / JCM 8931 / NBRC 15437 / B12</strain>
    </source>
</reference>
<reference evidence="3" key="2">
    <citation type="journal article" date="2021" name="Environ. Microbiol.">
        <title>New insights into the diversity and evolution of the archaeal mobilome from three complete genomes of Saccharolobus shibatae.</title>
        <authorList>
            <person name="Medvedeva S."/>
            <person name="Brandt D."/>
            <person name="Cvirkaite-Krupovic V."/>
            <person name="Liu Y."/>
            <person name="Severinov K."/>
            <person name="Ishino S."/>
            <person name="Ishino Y."/>
            <person name="Prangishvili D."/>
            <person name="Kalinowski J."/>
            <person name="Krupovic M."/>
        </authorList>
    </citation>
    <scope>NUCLEOTIDE SEQUENCE [LARGE SCALE GENOMIC DNA]</scope>
    <source>
        <strain>ATCC 51178 / DSM 5389 / JCM 8931 / NBRC 15437 / B12</strain>
    </source>
</reference>
<organism>
    <name type="scientific">Saccharolobus shibatae (strain ATCC 51178 / DSM 5389 / JCM 8931 / NBRC 15437 / B12)</name>
    <name type="common">Sulfolobus shibatae</name>
    <dbReference type="NCBI Taxonomy" id="523848"/>
    <lineage>
        <taxon>Archaea</taxon>
        <taxon>Thermoproteota</taxon>
        <taxon>Thermoprotei</taxon>
        <taxon>Sulfolobales</taxon>
        <taxon>Sulfolobaceae</taxon>
        <taxon>Saccharolobus</taxon>
    </lineage>
</organism>
<dbReference type="EMBL" id="L36863">
    <property type="protein sequence ID" value="AAA72453.1"/>
    <property type="molecule type" value="Genomic_DNA"/>
</dbReference>
<dbReference type="EMBL" id="CP077717">
    <property type="protein sequence ID" value="QXJ30289.1"/>
    <property type="molecule type" value="Genomic_DNA"/>
</dbReference>
<dbReference type="KEGG" id="sshi:J5U23_03187"/>
<dbReference type="OrthoDB" id="27163at2157"/>
<dbReference type="Proteomes" id="UP000694018">
    <property type="component" value="Chromosome"/>
</dbReference>
<dbReference type="GO" id="GO:0008270">
    <property type="term" value="F:zinc ion binding"/>
    <property type="evidence" value="ECO:0007669"/>
    <property type="project" value="UniProtKB-KW"/>
</dbReference>
<dbReference type="Gene3D" id="2.20.25.10">
    <property type="match status" value="1"/>
</dbReference>
<dbReference type="InterPro" id="IPR013137">
    <property type="entry name" value="Znf_TFIIB"/>
</dbReference>
<dbReference type="Pfam" id="PF08271">
    <property type="entry name" value="Zn_Ribbon_TF"/>
    <property type="match status" value="1"/>
</dbReference>
<dbReference type="SUPFAM" id="SSF57783">
    <property type="entry name" value="Zinc beta-ribbon"/>
    <property type="match status" value="1"/>
</dbReference>
<dbReference type="PROSITE" id="PS51134">
    <property type="entry name" value="ZF_TFIIB"/>
    <property type="match status" value="1"/>
</dbReference>
<comment type="cofactor">
    <cofactor evidence="1">
        <name>Zn(2+)</name>
        <dbReference type="ChEBI" id="CHEBI:29105"/>
    </cofactor>
</comment>
<comment type="similarity">
    <text evidence="2">Belongs to the TFIIB family.</text>
</comment>
<accession>P46221</accession>
<accession>A0A8F5BRU5</accession>
<protein>
    <recommendedName>
        <fullName evidence="3">TFIIB-type zinc finger protein</fullName>
    </recommendedName>
    <alternativeName>
        <fullName evidence="2">Uncharacterized protein ORF2 in thsB 5'region</fullName>
    </alternativeName>
</protein>
<keyword id="KW-0479">Metal-binding</keyword>
<keyword id="KW-0862">Zinc</keyword>
<keyword id="KW-0863">Zinc-finger</keyword>
<sequence>MECPVCGSNEIVWDNKNGEVVCSNCGIIIDNIYYSGQNESESTDTIIISNTFYKDEILIKELRIKNFLKKNRIKNKKTDQYEIILRSMLVDAQYKKIYKVLYDEGILSGLKAKSKLGLLIYFRFALNDRYLHQLKEFNIKNENLRKILKRIGRKRLTLIFDKLNEESDRI</sequence>
<feature type="chain" id="PRO_0000119342" description="TFIIB-type zinc finger protein">
    <location>
        <begin position="1"/>
        <end position="170"/>
    </location>
</feature>
<feature type="zinc finger region" description="TFIIB-type" evidence="1">
    <location>
        <begin position="1"/>
        <end position="30"/>
    </location>
</feature>
<feature type="binding site" evidence="1">
    <location>
        <position position="3"/>
    </location>
    <ligand>
        <name>Zn(2+)</name>
        <dbReference type="ChEBI" id="CHEBI:29105"/>
    </ligand>
</feature>
<feature type="binding site" evidence="1">
    <location>
        <position position="6"/>
    </location>
    <ligand>
        <name>Zn(2+)</name>
        <dbReference type="ChEBI" id="CHEBI:29105"/>
    </ligand>
</feature>
<feature type="binding site" evidence="1">
    <location>
        <position position="22"/>
    </location>
    <ligand>
        <name>Zn(2+)</name>
        <dbReference type="ChEBI" id="CHEBI:29105"/>
    </ligand>
</feature>
<feature type="binding site" evidence="1">
    <location>
        <position position="25"/>
    </location>
    <ligand>
        <name>Zn(2+)</name>
        <dbReference type="ChEBI" id="CHEBI:29105"/>
    </ligand>
</feature>